<name>MUTL_LACH4</name>
<keyword id="KW-0227">DNA damage</keyword>
<keyword id="KW-0234">DNA repair</keyword>
<comment type="function">
    <text evidence="1">This protein is involved in the repair of mismatches in DNA. It is required for dam-dependent methyl-directed DNA mismatch repair. May act as a 'molecular matchmaker', a protein that promotes the formation of a stable complex between two or more DNA-binding proteins in an ATP-dependent manner without itself being part of a final effector complex.</text>
</comment>
<comment type="similarity">
    <text evidence="1">Belongs to the DNA mismatch repair MutL/HexB family.</text>
</comment>
<proteinExistence type="inferred from homology"/>
<accession>A8YTI0</accession>
<feature type="chain" id="PRO_1000071507" description="DNA mismatch repair protein MutL">
    <location>
        <begin position="1"/>
        <end position="636"/>
    </location>
</feature>
<feature type="region of interest" description="Disordered" evidence="2">
    <location>
        <begin position="362"/>
        <end position="393"/>
    </location>
</feature>
<feature type="compositionally biased region" description="Basic and acidic residues" evidence="2">
    <location>
        <begin position="363"/>
        <end position="393"/>
    </location>
</feature>
<sequence>MAKIHELSENLTNQIAAGEVIERPASVVKELVENSLDAGATRIRVDFIDAGLKQIVVQDNGTGIARDQVDLAFTRHATSKISNEHDLFKVSTLGFRGEALASISAVSHVEIVTATENAIGIKADFSGGSKKGQEDAASQKGTKITVRDLFFNTPARLKYLRSPRTEIMKIVDIINRLSLGYPHVSFTLSNTGKVLFRTTGNGNLKQTVANVYGRHIAEKMESFEAKDSDFKITGLMSKPELTRSTRNFISILLNGRYIKNFQLNNAIMDGYGSKLAARHYPIVVITIHVDPMLVDVNVHPTKQEVRLSKEKELSRLITDAISDALLDKTEQSSGFANLENKRETLVDQLEFNLNQDVVNTTRKTPEVHEEAEKPEFLVKQEAKNSEEPKNETEHNYVDINIPREDDQYIITKTWDKNVALQQKLMPFSNKKVDQEVISTGDETLANNLPRLAYVGKIDTYLLAENDGDLYLIDQVAARRRLQFEQIYQTITSKKIVQQGLLTPIVLEFGNLDFLQIKDKIYQIKQLGIYLDEFGQNSFIVRSYPTWIHDHVEESIREILDNYLNLDKGKTQNLFKRVAALEAKRSVKGKINLSAAEGTQIITDLRKTSDPYHDADGRLILVRISQNELRKMFKKGE</sequence>
<gene>
    <name evidence="1" type="primary">mutL</name>
    <name type="ordered locus">lhv_0428</name>
</gene>
<reference key="1">
    <citation type="journal article" date="2008" name="J. Bacteriol.">
        <title>Genome sequence of Lactobacillus helveticus: an organism distinguished by selective gene loss and IS element expansion.</title>
        <authorList>
            <person name="Callanan M."/>
            <person name="Kaleta P."/>
            <person name="O'Callaghan J."/>
            <person name="O'Sullivan O."/>
            <person name="Jordan K."/>
            <person name="McAuliffe O."/>
            <person name="Sangrador-Vegas A."/>
            <person name="Slattery L."/>
            <person name="Fitzgerald G.F."/>
            <person name="Beresford T."/>
            <person name="Ross R.P."/>
        </authorList>
    </citation>
    <scope>NUCLEOTIDE SEQUENCE [LARGE SCALE GENOMIC DNA]</scope>
    <source>
        <strain>DPC 4571</strain>
    </source>
</reference>
<dbReference type="EMBL" id="CP000517">
    <property type="protein sequence ID" value="ABX26636.1"/>
    <property type="molecule type" value="Genomic_DNA"/>
</dbReference>
<dbReference type="RefSeq" id="WP_012211440.1">
    <property type="nucleotide sequence ID" value="NC_010080.1"/>
</dbReference>
<dbReference type="SMR" id="A8YTI0"/>
<dbReference type="KEGG" id="lhe:lhv_0428"/>
<dbReference type="eggNOG" id="COG0323">
    <property type="taxonomic scope" value="Bacteria"/>
</dbReference>
<dbReference type="HOGENOM" id="CLU_004131_4_1_9"/>
<dbReference type="Proteomes" id="UP000000790">
    <property type="component" value="Chromosome"/>
</dbReference>
<dbReference type="GO" id="GO:0032300">
    <property type="term" value="C:mismatch repair complex"/>
    <property type="evidence" value="ECO:0007669"/>
    <property type="project" value="InterPro"/>
</dbReference>
<dbReference type="GO" id="GO:0005524">
    <property type="term" value="F:ATP binding"/>
    <property type="evidence" value="ECO:0007669"/>
    <property type="project" value="InterPro"/>
</dbReference>
<dbReference type="GO" id="GO:0016887">
    <property type="term" value="F:ATP hydrolysis activity"/>
    <property type="evidence" value="ECO:0007669"/>
    <property type="project" value="InterPro"/>
</dbReference>
<dbReference type="GO" id="GO:0140664">
    <property type="term" value="F:ATP-dependent DNA damage sensor activity"/>
    <property type="evidence" value="ECO:0007669"/>
    <property type="project" value="InterPro"/>
</dbReference>
<dbReference type="GO" id="GO:0030983">
    <property type="term" value="F:mismatched DNA binding"/>
    <property type="evidence" value="ECO:0007669"/>
    <property type="project" value="InterPro"/>
</dbReference>
<dbReference type="GO" id="GO:0006298">
    <property type="term" value="P:mismatch repair"/>
    <property type="evidence" value="ECO:0007669"/>
    <property type="project" value="UniProtKB-UniRule"/>
</dbReference>
<dbReference type="CDD" id="cd16926">
    <property type="entry name" value="HATPase_MutL-MLH-PMS-like"/>
    <property type="match status" value="1"/>
</dbReference>
<dbReference type="CDD" id="cd00782">
    <property type="entry name" value="MutL_Trans"/>
    <property type="match status" value="1"/>
</dbReference>
<dbReference type="FunFam" id="3.30.565.10:FF:000003">
    <property type="entry name" value="DNA mismatch repair endonuclease MutL"/>
    <property type="match status" value="1"/>
</dbReference>
<dbReference type="Gene3D" id="3.30.230.10">
    <property type="match status" value="1"/>
</dbReference>
<dbReference type="Gene3D" id="3.30.565.10">
    <property type="entry name" value="Histidine kinase-like ATPase, C-terminal domain"/>
    <property type="match status" value="1"/>
</dbReference>
<dbReference type="Gene3D" id="3.30.1540.20">
    <property type="entry name" value="MutL, C-terminal domain, dimerisation subdomain"/>
    <property type="match status" value="1"/>
</dbReference>
<dbReference type="Gene3D" id="3.30.1370.100">
    <property type="entry name" value="MutL, C-terminal domain, regulatory subdomain"/>
    <property type="match status" value="1"/>
</dbReference>
<dbReference type="HAMAP" id="MF_00149">
    <property type="entry name" value="DNA_mis_repair"/>
    <property type="match status" value="1"/>
</dbReference>
<dbReference type="InterPro" id="IPR014762">
    <property type="entry name" value="DNA_mismatch_repair_CS"/>
</dbReference>
<dbReference type="InterPro" id="IPR020667">
    <property type="entry name" value="DNA_mismatch_repair_MutL"/>
</dbReference>
<dbReference type="InterPro" id="IPR013507">
    <property type="entry name" value="DNA_mismatch_S5_2-like"/>
</dbReference>
<dbReference type="InterPro" id="IPR036890">
    <property type="entry name" value="HATPase_C_sf"/>
</dbReference>
<dbReference type="InterPro" id="IPR002099">
    <property type="entry name" value="MutL/Mlh/PMS"/>
</dbReference>
<dbReference type="InterPro" id="IPR038973">
    <property type="entry name" value="MutL/Mlh/Pms-like"/>
</dbReference>
<dbReference type="InterPro" id="IPR014790">
    <property type="entry name" value="MutL_C"/>
</dbReference>
<dbReference type="InterPro" id="IPR042120">
    <property type="entry name" value="MutL_C_dimsub"/>
</dbReference>
<dbReference type="InterPro" id="IPR042121">
    <property type="entry name" value="MutL_C_regsub"/>
</dbReference>
<dbReference type="InterPro" id="IPR037198">
    <property type="entry name" value="MutL_C_sf"/>
</dbReference>
<dbReference type="InterPro" id="IPR020568">
    <property type="entry name" value="Ribosomal_Su5_D2-typ_SF"/>
</dbReference>
<dbReference type="InterPro" id="IPR014721">
    <property type="entry name" value="Ribsml_uS5_D2-typ_fold_subgr"/>
</dbReference>
<dbReference type="NCBIfam" id="TIGR00585">
    <property type="entry name" value="mutl"/>
    <property type="match status" value="1"/>
</dbReference>
<dbReference type="PANTHER" id="PTHR10073">
    <property type="entry name" value="DNA MISMATCH REPAIR PROTEIN MLH, PMS, MUTL"/>
    <property type="match status" value="1"/>
</dbReference>
<dbReference type="PANTHER" id="PTHR10073:SF12">
    <property type="entry name" value="DNA MISMATCH REPAIR PROTEIN MLH1"/>
    <property type="match status" value="1"/>
</dbReference>
<dbReference type="Pfam" id="PF01119">
    <property type="entry name" value="DNA_mis_repair"/>
    <property type="match status" value="1"/>
</dbReference>
<dbReference type="Pfam" id="PF13589">
    <property type="entry name" value="HATPase_c_3"/>
    <property type="match status" value="1"/>
</dbReference>
<dbReference type="Pfam" id="PF08676">
    <property type="entry name" value="MutL_C"/>
    <property type="match status" value="1"/>
</dbReference>
<dbReference type="SMART" id="SM01340">
    <property type="entry name" value="DNA_mis_repair"/>
    <property type="match status" value="1"/>
</dbReference>
<dbReference type="SMART" id="SM00853">
    <property type="entry name" value="MutL_C"/>
    <property type="match status" value="1"/>
</dbReference>
<dbReference type="SUPFAM" id="SSF55874">
    <property type="entry name" value="ATPase domain of HSP90 chaperone/DNA topoisomerase II/histidine kinase"/>
    <property type="match status" value="1"/>
</dbReference>
<dbReference type="SUPFAM" id="SSF118116">
    <property type="entry name" value="DNA mismatch repair protein MutL"/>
    <property type="match status" value="1"/>
</dbReference>
<dbReference type="SUPFAM" id="SSF54211">
    <property type="entry name" value="Ribosomal protein S5 domain 2-like"/>
    <property type="match status" value="1"/>
</dbReference>
<dbReference type="PROSITE" id="PS00058">
    <property type="entry name" value="DNA_MISMATCH_REPAIR_1"/>
    <property type="match status" value="1"/>
</dbReference>
<organism>
    <name type="scientific">Lactobacillus helveticus (strain DPC 4571)</name>
    <dbReference type="NCBI Taxonomy" id="405566"/>
    <lineage>
        <taxon>Bacteria</taxon>
        <taxon>Bacillati</taxon>
        <taxon>Bacillota</taxon>
        <taxon>Bacilli</taxon>
        <taxon>Lactobacillales</taxon>
        <taxon>Lactobacillaceae</taxon>
        <taxon>Lactobacillus</taxon>
    </lineage>
</organism>
<protein>
    <recommendedName>
        <fullName evidence="1">DNA mismatch repair protein MutL</fullName>
    </recommendedName>
</protein>
<evidence type="ECO:0000255" key="1">
    <source>
        <dbReference type="HAMAP-Rule" id="MF_00149"/>
    </source>
</evidence>
<evidence type="ECO:0000256" key="2">
    <source>
        <dbReference type="SAM" id="MobiDB-lite"/>
    </source>
</evidence>